<protein>
    <recommendedName>
        <fullName evidence="7">Growth hormone receptor</fullName>
        <shortName>GH receptor</shortName>
    </recommendedName>
    <alternativeName>
        <fullName>Somatotropin receptor</fullName>
    </alternativeName>
    <component>
        <recommendedName>
            <fullName>Growth hormone-binding protein</fullName>
            <shortName>GH-binding protein</shortName>
            <shortName>GHBP</shortName>
        </recommendedName>
        <alternativeName>
            <fullName>Serum-binding protein</fullName>
        </alternativeName>
    </component>
</protein>
<sequence length="634" mass="70845">MDLWQLLLTLAVAGSSDAFSGSEATPAFFVRASQSLQILYPGLETNSSGNLKFTKCRSPELETFSCHWTDGANHSLQSPGSVQMFYIRRDIQEWKECPDYVSAGENSCYFNSSYTSVWTPYCIKLTSNGGIVDHKCFSVEDIVQPDPPVGLNWTLLNISLTEIHADILVKWEPPPNTDVKMGWIILEYELHYKELNETQWKMMDPLLVTSVPMYSLRLDKEYEVRVRTRQRNTEKYGKFSEVLLITFPQMNPSACEEDFQFPWFLIIIFGILGLTVTLFLLIFSKQQRIKMLILPPVPVPKIKGIDPDLLKEGKLEEVNTILAIHDNYKHEFYNDDSWVEFIELDIDDPDEKTEGSDTDRLLSNDHEKSLSIFGAKDDDSGRTSCYEPDILETDFHVSDMCDGTSEVAQPQRLKGEADILCLDQKNQNNSPSNDAAPASQQPSVILVEENKPRPLPIGGTESTHQAVHTQLSNPSSLANIDFYAQVSDITPAGNVVLSPGQKNKTGNPQCDTHPEVVTPSQADFIVDSAYFCEVDAKKYIALAPDVEAESHIEPSFNQEDIYITTESLTTTAGRSGTAENVPSSEIPVPDYTSIHIVQSPQGLVLNATALPLPDKEFLSSCGYVSTDQLNKIMP</sequence>
<organism>
    <name type="scientific">Ovis aries</name>
    <name type="common">Sheep</name>
    <dbReference type="NCBI Taxonomy" id="9940"/>
    <lineage>
        <taxon>Eukaryota</taxon>
        <taxon>Metazoa</taxon>
        <taxon>Chordata</taxon>
        <taxon>Craniata</taxon>
        <taxon>Vertebrata</taxon>
        <taxon>Euteleostomi</taxon>
        <taxon>Mammalia</taxon>
        <taxon>Eutheria</taxon>
        <taxon>Laurasiatheria</taxon>
        <taxon>Artiodactyla</taxon>
        <taxon>Ruminantia</taxon>
        <taxon>Pecora</taxon>
        <taxon>Bovidae</taxon>
        <taxon>Caprinae</taxon>
        <taxon>Ovis</taxon>
    </lineage>
</organism>
<gene>
    <name type="primary">GHR</name>
</gene>
<name>GHR_SHEEP</name>
<proteinExistence type="evidence at transcript level"/>
<feature type="signal peptide" evidence="4">
    <location>
        <begin position="1"/>
        <end position="18"/>
    </location>
</feature>
<feature type="chain" id="PRO_0000010973" description="Growth hormone receptor">
    <location>
        <begin position="19"/>
        <end position="634"/>
    </location>
</feature>
<feature type="chain" id="PRO_0000010974" description="Growth hormone-binding protein" evidence="3">
    <location>
        <begin position="19"/>
        <end position="252"/>
    </location>
</feature>
<feature type="topological domain" description="Extracellular" evidence="4">
    <location>
        <begin position="19"/>
        <end position="260"/>
    </location>
</feature>
<feature type="transmembrane region" description="Helical" evidence="4">
    <location>
        <begin position="261"/>
        <end position="284"/>
    </location>
</feature>
<feature type="topological domain" description="Cytoplasmic" evidence="4">
    <location>
        <begin position="285"/>
        <end position="634"/>
    </location>
</feature>
<feature type="domain" description="Fibronectin type-III" evidence="5">
    <location>
        <begin position="147"/>
        <end position="250"/>
    </location>
</feature>
<feature type="region of interest" description="Required for JAK2 binding" evidence="2">
    <location>
        <begin position="290"/>
        <end position="375"/>
    </location>
</feature>
<feature type="region of interest" description="Disordered" evidence="6">
    <location>
        <begin position="451"/>
        <end position="471"/>
    </location>
</feature>
<feature type="short sequence motif" description="WSXWS motif" evidence="1">
    <location>
        <begin position="236"/>
        <end position="240"/>
    </location>
</feature>
<feature type="short sequence motif" description="Box 1 motif" evidence="2">
    <location>
        <begin position="293"/>
        <end position="301"/>
    </location>
</feature>
<feature type="short sequence motif" description="UbE motif" evidence="3">
    <location>
        <begin position="336"/>
        <end position="345"/>
    </location>
</feature>
<feature type="compositionally biased region" description="Polar residues" evidence="6">
    <location>
        <begin position="460"/>
        <end position="471"/>
    </location>
</feature>
<feature type="modified residue" description="Phosphoserine" evidence="1">
    <location>
        <position position="337"/>
    </location>
</feature>
<feature type="modified residue" description="Phosphotyrosine" evidence="1">
    <location>
        <position position="483"/>
    </location>
</feature>
<feature type="modified residue" description="Phosphotyrosine" evidence="1">
    <location>
        <position position="591"/>
    </location>
</feature>
<feature type="glycosylation site" description="N-linked (GlcNAc...) asparagine" evidence="4">
    <location>
        <position position="46"/>
    </location>
</feature>
<feature type="glycosylation site" description="N-linked (GlcNAc...) asparagine" evidence="4">
    <location>
        <position position="73"/>
    </location>
</feature>
<feature type="glycosylation site" description="N-linked (GlcNAc...) asparagine" evidence="4">
    <location>
        <position position="111"/>
    </location>
</feature>
<feature type="glycosylation site" description="N-linked (GlcNAc...) asparagine" evidence="4">
    <location>
        <position position="152"/>
    </location>
</feature>
<feature type="glycosylation site" description="N-linked (GlcNAc...) asparagine" evidence="4">
    <location>
        <position position="157"/>
    </location>
</feature>
<feature type="glycosylation site" description="N-linked (GlcNAc...) asparagine" evidence="4">
    <location>
        <position position="196"/>
    </location>
</feature>
<feature type="disulfide bond" evidence="1">
    <location>
        <begin position="56"/>
        <end position="66"/>
    </location>
</feature>
<feature type="disulfide bond" evidence="1">
    <location>
        <begin position="97"/>
        <end position="108"/>
    </location>
</feature>
<feature type="disulfide bond" evidence="1">
    <location>
        <begin position="122"/>
        <end position="136"/>
    </location>
</feature>
<evidence type="ECO:0000250" key="1">
    <source>
        <dbReference type="UniProtKB" id="P10912"/>
    </source>
</evidence>
<evidence type="ECO:0000250" key="2">
    <source>
        <dbReference type="UniProtKB" id="P16310"/>
    </source>
</evidence>
<evidence type="ECO:0000250" key="3">
    <source>
        <dbReference type="UniProtKB" id="P19941"/>
    </source>
</evidence>
<evidence type="ECO:0000255" key="4"/>
<evidence type="ECO:0000255" key="5">
    <source>
        <dbReference type="PROSITE-ProRule" id="PRU00316"/>
    </source>
</evidence>
<evidence type="ECO:0000256" key="6">
    <source>
        <dbReference type="SAM" id="MobiDB-lite"/>
    </source>
</evidence>
<evidence type="ECO:0000303" key="7">
    <source>
    </source>
</evidence>
<evidence type="ECO:0000305" key="8"/>
<keyword id="KW-1003">Cell membrane</keyword>
<keyword id="KW-1015">Disulfide bond</keyword>
<keyword id="KW-0254">Endocytosis</keyword>
<keyword id="KW-0325">Glycoprotein</keyword>
<keyword id="KW-0472">Membrane</keyword>
<keyword id="KW-0597">Phosphoprotein</keyword>
<keyword id="KW-0675">Receptor</keyword>
<keyword id="KW-1185">Reference proteome</keyword>
<keyword id="KW-0964">Secreted</keyword>
<keyword id="KW-0732">Signal</keyword>
<keyword id="KW-0812">Transmembrane</keyword>
<keyword id="KW-1133">Transmembrane helix</keyword>
<keyword id="KW-0832">Ubl conjugation</keyword>
<accession>Q28575</accession>
<dbReference type="EMBL" id="M82912">
    <property type="protein sequence ID" value="AAA73171.1"/>
    <property type="molecule type" value="mRNA"/>
</dbReference>
<dbReference type="PIR" id="S33339">
    <property type="entry name" value="S33339"/>
</dbReference>
<dbReference type="RefSeq" id="NP_001009323.1">
    <property type="nucleotide sequence ID" value="NM_001009323.2"/>
</dbReference>
<dbReference type="RefSeq" id="XP_011952067.1">
    <property type="nucleotide sequence ID" value="XM_012096677.4"/>
</dbReference>
<dbReference type="RefSeq" id="XP_027835738.1">
    <property type="nucleotide sequence ID" value="XM_027979937.3"/>
</dbReference>
<dbReference type="RefSeq" id="XP_060256189.1">
    <property type="nucleotide sequence ID" value="XM_060400206.1"/>
</dbReference>
<dbReference type="SMR" id="Q28575"/>
<dbReference type="STRING" id="9940.ENSOARP00000009485"/>
<dbReference type="GlyCosmos" id="Q28575">
    <property type="glycosylation" value="6 sites, No reported glycans"/>
</dbReference>
<dbReference type="PaxDb" id="9940-ENSOARP00000009485"/>
<dbReference type="Ensembl" id="ENSOART00185014736">
    <property type="protein sequence ID" value="ENSOARP00185007047"/>
    <property type="gene ID" value="ENSOARG00185009142"/>
</dbReference>
<dbReference type="Ensembl" id="ENSOART00215049018">
    <property type="protein sequence ID" value="ENSOARP00215025230"/>
    <property type="gene ID" value="ENSOARG00215029415"/>
</dbReference>
<dbReference type="Ensembl" id="ENSOART00260026705">
    <property type="protein sequence ID" value="ENSOARP00260013398"/>
    <property type="gene ID" value="ENSOARG00260016491"/>
</dbReference>
<dbReference type="GeneID" id="443333"/>
<dbReference type="KEGG" id="oas:443333"/>
<dbReference type="CTD" id="2690"/>
<dbReference type="eggNOG" id="KOG3555">
    <property type="taxonomic scope" value="Eukaryota"/>
</dbReference>
<dbReference type="OrthoDB" id="9890215at2759"/>
<dbReference type="Proteomes" id="UP000002356">
    <property type="component" value="Unplaced"/>
</dbReference>
<dbReference type="GO" id="GO:0009897">
    <property type="term" value="C:external side of plasma membrane"/>
    <property type="evidence" value="ECO:0007669"/>
    <property type="project" value="TreeGrafter"/>
</dbReference>
<dbReference type="GO" id="GO:0005576">
    <property type="term" value="C:extracellular region"/>
    <property type="evidence" value="ECO:0007669"/>
    <property type="project" value="UniProtKB-SubCell"/>
</dbReference>
<dbReference type="GO" id="GO:0004896">
    <property type="term" value="F:cytokine receptor activity"/>
    <property type="evidence" value="ECO:0007669"/>
    <property type="project" value="InterPro"/>
</dbReference>
<dbReference type="GO" id="GO:0006897">
    <property type="term" value="P:endocytosis"/>
    <property type="evidence" value="ECO:0007669"/>
    <property type="project" value="UniProtKB-KW"/>
</dbReference>
<dbReference type="CDD" id="cd00063">
    <property type="entry name" value="FN3"/>
    <property type="match status" value="1"/>
</dbReference>
<dbReference type="FunFam" id="2.60.40.10:FF:000269">
    <property type="entry name" value="Growth hormone receptor"/>
    <property type="match status" value="1"/>
</dbReference>
<dbReference type="FunFam" id="2.60.40.10:FF:000318">
    <property type="entry name" value="Growth hormone receptor"/>
    <property type="match status" value="1"/>
</dbReference>
<dbReference type="Gene3D" id="2.60.40.10">
    <property type="entry name" value="Immunoglobulins"/>
    <property type="match status" value="2"/>
</dbReference>
<dbReference type="InterPro" id="IPR003961">
    <property type="entry name" value="FN3_dom"/>
</dbReference>
<dbReference type="InterPro" id="IPR036116">
    <property type="entry name" value="FN3_sf"/>
</dbReference>
<dbReference type="InterPro" id="IPR025871">
    <property type="entry name" value="GHBP"/>
</dbReference>
<dbReference type="InterPro" id="IPR015152">
    <property type="entry name" value="Growth/epo_recpt_lig-bind"/>
</dbReference>
<dbReference type="InterPro" id="IPR013783">
    <property type="entry name" value="Ig-like_fold"/>
</dbReference>
<dbReference type="InterPro" id="IPR003528">
    <property type="entry name" value="Long_hematopoietin_rcpt_CS"/>
</dbReference>
<dbReference type="PANTHER" id="PTHR23037">
    <property type="entry name" value="CYTOKINE RECEPTOR"/>
    <property type="match status" value="1"/>
</dbReference>
<dbReference type="PANTHER" id="PTHR23037:SF46">
    <property type="entry name" value="INTERLEUKIN 5 RECEPTOR SUBUNIT ALPHA"/>
    <property type="match status" value="1"/>
</dbReference>
<dbReference type="Pfam" id="PF09067">
    <property type="entry name" value="EpoR_lig-bind"/>
    <property type="match status" value="1"/>
</dbReference>
<dbReference type="Pfam" id="PF12772">
    <property type="entry name" value="GHBP"/>
    <property type="match status" value="1"/>
</dbReference>
<dbReference type="SUPFAM" id="SSF49265">
    <property type="entry name" value="Fibronectin type III"/>
    <property type="match status" value="2"/>
</dbReference>
<dbReference type="PROSITE" id="PS50853">
    <property type="entry name" value="FN3"/>
    <property type="match status" value="1"/>
</dbReference>
<dbReference type="PROSITE" id="PS01352">
    <property type="entry name" value="HEMATOPO_REC_L_F1"/>
    <property type="match status" value="1"/>
</dbReference>
<reference key="1">
    <citation type="journal article" date="1990" name="Mol. Cell. Endocrinol.">
        <title>The sheep growth hormone receptor: molecular cloning and ontogeny of mRNA expression in the liver.</title>
        <authorList>
            <person name="Adams T.E."/>
            <person name="Baker L."/>
            <person name="Fiddes R.J."/>
            <person name="Brandon M.R."/>
        </authorList>
    </citation>
    <scope>NUCLEOTIDE SEQUENCE [MRNA]</scope>
    <source>
        <tissue>Liver</tissue>
    </source>
</reference>
<comment type="function">
    <text evidence="1">Receptor for pituitary gland growth hormone (GH1) involved in regulating postnatal body growth. On ligand binding, couples to the JAK2/STAT5 pathway.</text>
</comment>
<comment type="function">
    <molecule>Growth hormone-binding protein</molecule>
    <text evidence="1">The soluble form (GHBP) acts as a reservoir of growth hormone in plasma and may be a modulator/inhibitor of GH signaling.</text>
</comment>
<comment type="subunit">
    <text evidence="1">On growth hormone (GH) binding, forms homodimers and binds JAK2 via a box 1-containing domain.</text>
</comment>
<comment type="subcellular location">
    <subcellularLocation>
        <location evidence="1">Cell membrane</location>
        <topology evidence="4">Single-pass type I membrane protein</topology>
    </subcellularLocation>
    <text evidence="3">On growth hormone binding, GHR is ubiquitinated, internalized, down-regulated and transported into a degradative or non-degradative pathway.</text>
</comment>
<comment type="subcellular location">
    <molecule>Growth hormone-binding protein</molecule>
    <subcellularLocation>
        <location evidence="1">Secreted</location>
    </subcellularLocation>
    <text evidence="1">Complexed to a substantial fraction of circulating GH.</text>
</comment>
<comment type="domain">
    <text evidence="1">The WSXWS motif appears to be necessary for proper protein folding and thereby efficient intracellular transport and cell-surface receptor binding.</text>
</comment>
<comment type="domain">
    <text evidence="2">The box 1 motif is required for JAK interaction and/or activation.</text>
</comment>
<comment type="domain">
    <text evidence="1">The extracellular domain is the ligand-binding domain representing the growth hormone-binding protein (GHBP).</text>
</comment>
<comment type="domain">
    <text evidence="3">The ubiquitination-dependent endocytosis motif (UbE) is required for recruitment of the ubiquitin conjugation system on to the receptor and for its internalization.</text>
</comment>
<comment type="PTM">
    <text evidence="1 3">The soluble form (GHBP) is produced by phorbol ester-promoted proteolytic cleavage at the cell surface (shedding) by ADAM17/TACE (By similarity). Shedding is inhibited by growth hormone (GH) binding to the receptor probably due to a conformational change in GHR rendering the receptor inaccessible to ADAM17 (By similarity).</text>
</comment>
<comment type="PTM">
    <text evidence="1">On GH binding, phosphorylated on tyrosine residues in the cytoplasmic domain by JAK2.</text>
</comment>
<comment type="PTM">
    <text evidence="1 3">Ubiquitinated by the ECS(SOCS2) complex following ligand-binding and phosphorylation by JAK2, leading to its degradation by the proteasome. Regulation by the ECS(SOCS2) complex acts as a negative feedback loop of growth hormone receptor signaling (By similarity). Ubiquitination is not sufficient for GHR internalization (By similarity).</text>
</comment>
<comment type="similarity">
    <text evidence="8">Belongs to the type I cytokine receptor family. Type 1 subfamily.</text>
</comment>